<protein>
    <recommendedName>
        <fullName>Drainin</fullName>
    </recommendedName>
    <alternativeName>
        <fullName>TBC1 domain family member 12 homolog</fullName>
    </alternativeName>
</protein>
<name>TBC12_DICDI</name>
<dbReference type="EMBL" id="U81500">
    <property type="protein sequence ID" value="AAD00520.1"/>
    <property type="molecule type" value="Genomic_DNA"/>
</dbReference>
<dbReference type="EMBL" id="AAFI02000005">
    <property type="protein sequence ID" value="EAL71915.1"/>
    <property type="molecule type" value="Genomic_DNA"/>
</dbReference>
<dbReference type="RefSeq" id="XP_646386.1">
    <property type="nucleotide sequence ID" value="XM_641294.1"/>
</dbReference>
<dbReference type="SMR" id="O96904"/>
<dbReference type="FunCoup" id="O96904">
    <property type="interactions" value="8"/>
</dbReference>
<dbReference type="IntAct" id="O96904">
    <property type="interactions" value="2"/>
</dbReference>
<dbReference type="MINT" id="O96904"/>
<dbReference type="STRING" id="44689.O96904"/>
<dbReference type="PaxDb" id="44689-DDB0191341"/>
<dbReference type="EnsemblProtists" id="EAL71915">
    <property type="protein sequence ID" value="EAL71915"/>
    <property type="gene ID" value="DDB_G0269130"/>
</dbReference>
<dbReference type="GeneID" id="8617341"/>
<dbReference type="KEGG" id="ddi:DDB_G0269130"/>
<dbReference type="dictyBase" id="DDB_G0269130">
    <property type="gene designation" value="phgA"/>
</dbReference>
<dbReference type="VEuPathDB" id="AmoebaDB:DDB_G0269130"/>
<dbReference type="eggNOG" id="KOG2223">
    <property type="taxonomic scope" value="Eukaryota"/>
</dbReference>
<dbReference type="HOGENOM" id="CLU_015133_3_0_1"/>
<dbReference type="InParanoid" id="O96904"/>
<dbReference type="OMA" id="FQEAGPY"/>
<dbReference type="PhylomeDB" id="O96904"/>
<dbReference type="PRO" id="PR:O96904"/>
<dbReference type="Proteomes" id="UP000002195">
    <property type="component" value="Chromosome 1"/>
</dbReference>
<dbReference type="GO" id="GO:0031164">
    <property type="term" value="C:contractile vacuolar membrane"/>
    <property type="evidence" value="ECO:0000314"/>
    <property type="project" value="dictyBase"/>
</dbReference>
<dbReference type="GO" id="GO:0000331">
    <property type="term" value="C:contractile vacuole"/>
    <property type="evidence" value="ECO:0000314"/>
    <property type="project" value="dictyBase"/>
</dbReference>
<dbReference type="GO" id="GO:0005096">
    <property type="term" value="F:GTPase activator activity"/>
    <property type="evidence" value="ECO:0000318"/>
    <property type="project" value="GO_Central"/>
</dbReference>
<dbReference type="GO" id="GO:0031267">
    <property type="term" value="F:small GTPase binding"/>
    <property type="evidence" value="ECO:0000353"/>
    <property type="project" value="dictyBase"/>
</dbReference>
<dbReference type="GO" id="GO:0033298">
    <property type="term" value="P:contractile vacuole organization"/>
    <property type="evidence" value="ECO:0000315"/>
    <property type="project" value="dictyBase"/>
</dbReference>
<dbReference type="GO" id="GO:0006971">
    <property type="term" value="P:hypotonic response"/>
    <property type="evidence" value="ECO:0000315"/>
    <property type="project" value="dictyBase"/>
</dbReference>
<dbReference type="GO" id="GO:0140028">
    <property type="term" value="P:pore formation during contractile vacuole discharge"/>
    <property type="evidence" value="ECO:0000315"/>
    <property type="project" value="dictyBase"/>
</dbReference>
<dbReference type="GO" id="GO:0051600">
    <property type="term" value="P:regulation of endocytosis by exocyst localization"/>
    <property type="evidence" value="ECO:0000315"/>
    <property type="project" value="dictyBase"/>
</dbReference>
<dbReference type="FunFam" id="1.10.8.270:FF:000034">
    <property type="entry name" value="TBC (Tre-2/Bub2/Cdc16) domain family"/>
    <property type="match status" value="1"/>
</dbReference>
<dbReference type="FunFam" id="1.10.472.80:FF:000006">
    <property type="entry name" value="TBC1 domain family member 14"/>
    <property type="match status" value="1"/>
</dbReference>
<dbReference type="Gene3D" id="1.10.8.270">
    <property type="entry name" value="putative rabgap domain of human tbc1 domain family member 14 like domains"/>
    <property type="match status" value="1"/>
</dbReference>
<dbReference type="Gene3D" id="1.10.10.750">
    <property type="entry name" value="Ypt/Rab-GAP domain of gyp1p, domain 1"/>
    <property type="match status" value="1"/>
</dbReference>
<dbReference type="Gene3D" id="1.10.472.80">
    <property type="entry name" value="Ypt/Rab-GAP domain of gyp1p, domain 3"/>
    <property type="match status" value="1"/>
</dbReference>
<dbReference type="InterPro" id="IPR000195">
    <property type="entry name" value="Rab-GAP-TBC_dom"/>
</dbReference>
<dbReference type="InterPro" id="IPR035969">
    <property type="entry name" value="Rab-GAP_TBC_sf"/>
</dbReference>
<dbReference type="InterPro" id="IPR050302">
    <property type="entry name" value="Rab_GAP_TBC_domain"/>
</dbReference>
<dbReference type="PANTHER" id="PTHR47219">
    <property type="entry name" value="RAB GTPASE-ACTIVATING PROTEIN 1-LIKE"/>
    <property type="match status" value="1"/>
</dbReference>
<dbReference type="PANTHER" id="PTHR47219:SF15">
    <property type="entry name" value="TBC1 DOMAIN FAMILY MEMBER 12 ISOFORM X1"/>
    <property type="match status" value="1"/>
</dbReference>
<dbReference type="Pfam" id="PF00566">
    <property type="entry name" value="RabGAP-TBC"/>
    <property type="match status" value="1"/>
</dbReference>
<dbReference type="SMART" id="SM00164">
    <property type="entry name" value="TBC"/>
    <property type="match status" value="1"/>
</dbReference>
<dbReference type="SUPFAM" id="SSF47923">
    <property type="entry name" value="Ypt/Rab-GAP domain of gyp1p"/>
    <property type="match status" value="2"/>
</dbReference>
<dbReference type="PROSITE" id="PS50086">
    <property type="entry name" value="TBC_RABGAP"/>
    <property type="match status" value="1"/>
</dbReference>
<evidence type="ECO:0000250" key="1"/>
<evidence type="ECO:0000255" key="2"/>
<evidence type="ECO:0000255" key="3">
    <source>
        <dbReference type="PROSITE-ProRule" id="PRU00163"/>
    </source>
</evidence>
<evidence type="ECO:0000269" key="4">
    <source>
    </source>
</evidence>
<evidence type="ECO:0000269" key="5">
    <source>
    </source>
</evidence>
<reference key="1">
    <citation type="journal article" date="1999" name="EMBO J.">
        <title>Drainin required for membrane fusion of the contractile vacuole in Dictyostelium is the prototype of a protein family also represented in man.</title>
        <authorList>
            <person name="Becker M."/>
            <person name="Matzner M."/>
            <person name="Gerisch G."/>
        </authorList>
    </citation>
    <scope>NUCLEOTIDE SEQUENCE [GENOMIC DNA]</scope>
    <scope>FUNCTION</scope>
    <scope>SUBCELLULAR LOCATION</scope>
    <scope>MUTAGENESIS OF 275-PHE--LEU-282</scope>
    <source>
        <strain>AX2</strain>
    </source>
</reference>
<reference key="2">
    <citation type="journal article" date="2005" name="Nature">
        <title>The genome of the social amoeba Dictyostelium discoideum.</title>
        <authorList>
            <person name="Eichinger L."/>
            <person name="Pachebat J.A."/>
            <person name="Gloeckner G."/>
            <person name="Rajandream M.A."/>
            <person name="Sucgang R."/>
            <person name="Berriman M."/>
            <person name="Song J."/>
            <person name="Olsen R."/>
            <person name="Szafranski K."/>
            <person name="Xu Q."/>
            <person name="Tunggal B."/>
            <person name="Kummerfeld S."/>
            <person name="Madera M."/>
            <person name="Konfortov B.A."/>
            <person name="Rivero F."/>
            <person name="Bankier A.T."/>
            <person name="Lehmann R."/>
            <person name="Hamlin N."/>
            <person name="Davies R."/>
            <person name="Gaudet P."/>
            <person name="Fey P."/>
            <person name="Pilcher K."/>
            <person name="Chen G."/>
            <person name="Saunders D."/>
            <person name="Sodergren E.J."/>
            <person name="Davis P."/>
            <person name="Kerhornou A."/>
            <person name="Nie X."/>
            <person name="Hall N."/>
            <person name="Anjard C."/>
            <person name="Hemphill L."/>
            <person name="Bason N."/>
            <person name="Farbrother P."/>
            <person name="Desany B."/>
            <person name="Just E."/>
            <person name="Morio T."/>
            <person name="Rost R."/>
            <person name="Churcher C.M."/>
            <person name="Cooper J."/>
            <person name="Haydock S."/>
            <person name="van Driessche N."/>
            <person name="Cronin A."/>
            <person name="Goodhead I."/>
            <person name="Muzny D.M."/>
            <person name="Mourier T."/>
            <person name="Pain A."/>
            <person name="Lu M."/>
            <person name="Harper D."/>
            <person name="Lindsay R."/>
            <person name="Hauser H."/>
            <person name="James K.D."/>
            <person name="Quiles M."/>
            <person name="Madan Babu M."/>
            <person name="Saito T."/>
            <person name="Buchrieser C."/>
            <person name="Wardroper A."/>
            <person name="Felder M."/>
            <person name="Thangavelu M."/>
            <person name="Johnson D."/>
            <person name="Knights A."/>
            <person name="Loulseged H."/>
            <person name="Mungall K.L."/>
            <person name="Oliver K."/>
            <person name="Price C."/>
            <person name="Quail M.A."/>
            <person name="Urushihara H."/>
            <person name="Hernandez J."/>
            <person name="Rabbinowitsch E."/>
            <person name="Steffen D."/>
            <person name="Sanders M."/>
            <person name="Ma J."/>
            <person name="Kohara Y."/>
            <person name="Sharp S."/>
            <person name="Simmonds M.N."/>
            <person name="Spiegler S."/>
            <person name="Tivey A."/>
            <person name="Sugano S."/>
            <person name="White B."/>
            <person name="Walker D."/>
            <person name="Woodward J.R."/>
            <person name="Winckler T."/>
            <person name="Tanaka Y."/>
            <person name="Shaulsky G."/>
            <person name="Schleicher M."/>
            <person name="Weinstock G.M."/>
            <person name="Rosenthal A."/>
            <person name="Cox E.C."/>
            <person name="Chisholm R.L."/>
            <person name="Gibbs R.A."/>
            <person name="Loomis W.F."/>
            <person name="Platzer M."/>
            <person name="Kay R.R."/>
            <person name="Williams J.G."/>
            <person name="Dear P.H."/>
            <person name="Noegel A.A."/>
            <person name="Barrell B.G."/>
            <person name="Kuspa A."/>
        </authorList>
    </citation>
    <scope>NUCLEOTIDE SEQUENCE [LARGE SCALE GENOMIC DNA]</scope>
    <source>
        <strain>AX4</strain>
    </source>
</reference>
<reference key="3">
    <citation type="journal article" date="2004" name="Traffic">
        <title>Structure-function analysis of the BEACH protein LvsA.</title>
        <authorList>
            <person name="Wu W.-I."/>
            <person name="Yajnik J."/>
            <person name="Siano M."/>
            <person name="De Lozanne A."/>
        </authorList>
    </citation>
    <scope>FUNCTION</scope>
    <scope>SUBCELLULAR LOCATION</scope>
</reference>
<gene>
    <name type="primary">phgA</name>
    <name type="ORF">DDB_G0269130</name>
</gene>
<comment type="function">
    <text evidence="1 4 5">May act as a GTPase-activating protein for Rab family protein(s) (By similarity). Required for osmotic regulation by the contractile vacuole in hypo-osmotic environments. Essential for periodic fusion of the contractile vacuole with the plasma membrane and consequent expulsion of water from the cell body.</text>
</comment>
<comment type="subcellular location">
    <subcellularLocation>
        <location>Contractile vacuole membrane</location>
    </subcellularLocation>
    <subcellularLocation>
        <location>Cytoplasm</location>
    </subcellularLocation>
</comment>
<sequence>MICFDNSTAHTDSNNNNNQCDLPENYKELVTTGKVEKLILSPSSSLDRPKTLPPKSQEEVLKHQREYEEIQRKAKKTLEREAKEKEKLDAIRKEKERSLIDARKVWEEDIIPVWEKNSKKRDIKKIKDLSWRGLPPAVRGKIWRLCIGNDLRVTDELFNIFLGHANNAYNKTTSPPLKSSLSSSSKSPNINIDLRQANNSIHHSRSPMNTSTDGEDDVLDLETTNMALILQDIQDTFPSLMIFQKGGPLHSDLIDVLGAYICYRPDIGYVPGMTFLAAMFLLNMEKCDAFLSLSNHINSVCFLPFFRQDQSGIPKYLAAMDSTVEALTPPLHKHFKEIGISAKNYLVDWITTLFSKALPLDVATRIWDLVFIEGEIFIYRTALSILRYFISDLIQATYDECIDLFNKLPQRKISEDKLFEEIQSIVLDQRKFDKLLEK</sequence>
<organism>
    <name type="scientific">Dictyostelium discoideum</name>
    <name type="common">Social amoeba</name>
    <dbReference type="NCBI Taxonomy" id="44689"/>
    <lineage>
        <taxon>Eukaryota</taxon>
        <taxon>Amoebozoa</taxon>
        <taxon>Evosea</taxon>
        <taxon>Eumycetozoa</taxon>
        <taxon>Dictyostelia</taxon>
        <taxon>Dictyosteliales</taxon>
        <taxon>Dictyosteliaceae</taxon>
        <taxon>Dictyostelium</taxon>
    </lineage>
</organism>
<accession>O96904</accession>
<accession>Q55CU5</accession>
<feature type="chain" id="PRO_0000327657" description="Drainin">
    <location>
        <begin position="1"/>
        <end position="438"/>
    </location>
</feature>
<feature type="domain" description="Rab-GAP TBC" evidence="3">
    <location>
        <begin position="133"/>
        <end position="374"/>
    </location>
</feature>
<feature type="coiled-coil region" evidence="2">
    <location>
        <begin position="54"/>
        <end position="104"/>
    </location>
</feature>
<feature type="mutagenesis site" description="Impairs localization to the contractile vacuole and fusion of the contractile vacuole with the plasma membrane." evidence="4">
    <location>
        <begin position="275"/>
        <end position="282"/>
    </location>
</feature>
<keyword id="KW-0175">Coiled coil</keyword>
<keyword id="KW-0963">Cytoplasm</keyword>
<keyword id="KW-0343">GTPase activation</keyword>
<keyword id="KW-0472">Membrane</keyword>
<keyword id="KW-1185">Reference proteome</keyword>
<keyword id="KW-0926">Vacuole</keyword>
<proteinExistence type="evidence at protein level"/>